<feature type="chain" id="PRO_0000407623" description="Methionine aminopeptidase 2-1">
    <location>
        <begin position="1"/>
        <end position="446"/>
    </location>
</feature>
<feature type="region of interest" description="Disordered" evidence="2">
    <location>
        <begin position="14"/>
        <end position="116"/>
    </location>
</feature>
<feature type="compositionally biased region" description="Basic residues" evidence="2">
    <location>
        <begin position="61"/>
        <end position="76"/>
    </location>
</feature>
<feature type="compositionally biased region" description="Polar residues" evidence="2">
    <location>
        <begin position="86"/>
        <end position="96"/>
    </location>
</feature>
<feature type="compositionally biased region" description="Basic and acidic residues" evidence="2">
    <location>
        <begin position="98"/>
        <end position="116"/>
    </location>
</feature>
<feature type="binding site" evidence="1">
    <location>
        <position position="199"/>
    </location>
    <ligand>
        <name>substrate</name>
    </ligand>
</feature>
<feature type="binding site" evidence="1">
    <location>
        <position position="219"/>
    </location>
    <ligand>
        <name>a divalent metal cation</name>
        <dbReference type="ChEBI" id="CHEBI:60240"/>
        <label>1</label>
    </ligand>
</feature>
<feature type="binding site" evidence="1">
    <location>
        <position position="230"/>
    </location>
    <ligand>
        <name>a divalent metal cation</name>
        <dbReference type="ChEBI" id="CHEBI:60240"/>
        <label>1</label>
    </ligand>
</feature>
<feature type="binding site" evidence="1">
    <location>
        <position position="230"/>
    </location>
    <ligand>
        <name>a divalent metal cation</name>
        <dbReference type="ChEBI" id="CHEBI:60240"/>
        <label>2</label>
        <note>catalytic</note>
    </ligand>
</feature>
<feature type="binding site" evidence="1">
    <location>
        <position position="299"/>
    </location>
    <ligand>
        <name>a divalent metal cation</name>
        <dbReference type="ChEBI" id="CHEBI:60240"/>
        <label>2</label>
        <note>catalytic</note>
    </ligand>
</feature>
<feature type="binding site" evidence="1">
    <location>
        <position position="307"/>
    </location>
    <ligand>
        <name>substrate</name>
    </ligand>
</feature>
<feature type="binding site" evidence="1">
    <location>
        <position position="332"/>
    </location>
    <ligand>
        <name>a divalent metal cation</name>
        <dbReference type="ChEBI" id="CHEBI:60240"/>
        <label>2</label>
        <note>catalytic</note>
    </ligand>
</feature>
<feature type="binding site" evidence="1">
    <location>
        <position position="427"/>
    </location>
    <ligand>
        <name>a divalent metal cation</name>
        <dbReference type="ChEBI" id="CHEBI:60240"/>
        <label>1</label>
    </ligand>
</feature>
<feature type="binding site" evidence="1">
    <location>
        <position position="427"/>
    </location>
    <ligand>
        <name>a divalent metal cation</name>
        <dbReference type="ChEBI" id="CHEBI:60240"/>
        <label>2</label>
        <note>catalytic</note>
    </ligand>
</feature>
<keyword id="KW-0031">Aminopeptidase</keyword>
<keyword id="KW-0963">Cytoplasm</keyword>
<keyword id="KW-0378">Hydrolase</keyword>
<keyword id="KW-0479">Metal-binding</keyword>
<keyword id="KW-0645">Protease</keyword>
<keyword id="KW-1185">Reference proteome</keyword>
<gene>
    <name evidence="11" type="primary">af410</name>
    <name type="ORF">AFUA_8G00410</name>
</gene>
<protein>
    <recommendedName>
        <fullName evidence="1">Methionine aminopeptidase 2-1</fullName>
        <shortName evidence="1">MAP 2-1</shortName>
        <shortName evidence="1">MetAP 2-1</shortName>
        <ecNumber evidence="1">3.4.11.18</ecNumber>
    </recommendedName>
    <alternativeName>
        <fullName evidence="1">Peptidase M</fullName>
    </alternativeName>
</protein>
<reference key="1">
    <citation type="journal article" date="2005" name="Nature">
        <title>Genomic sequence of the pathogenic and allergenic filamentous fungus Aspergillus fumigatus.</title>
        <authorList>
            <person name="Nierman W.C."/>
            <person name="Pain A."/>
            <person name="Anderson M.J."/>
            <person name="Wortman J.R."/>
            <person name="Kim H.S."/>
            <person name="Arroyo J."/>
            <person name="Berriman M."/>
            <person name="Abe K."/>
            <person name="Archer D.B."/>
            <person name="Bermejo C."/>
            <person name="Bennett J.W."/>
            <person name="Bowyer P."/>
            <person name="Chen D."/>
            <person name="Collins M."/>
            <person name="Coulsen R."/>
            <person name="Davies R."/>
            <person name="Dyer P.S."/>
            <person name="Farman M.L."/>
            <person name="Fedorova N."/>
            <person name="Fedorova N.D."/>
            <person name="Feldblyum T.V."/>
            <person name="Fischer R."/>
            <person name="Fosker N."/>
            <person name="Fraser A."/>
            <person name="Garcia J.L."/>
            <person name="Garcia M.J."/>
            <person name="Goble A."/>
            <person name="Goldman G.H."/>
            <person name="Gomi K."/>
            <person name="Griffith-Jones S."/>
            <person name="Gwilliam R."/>
            <person name="Haas B.J."/>
            <person name="Haas H."/>
            <person name="Harris D.E."/>
            <person name="Horiuchi H."/>
            <person name="Huang J."/>
            <person name="Humphray S."/>
            <person name="Jimenez J."/>
            <person name="Keller N."/>
            <person name="Khouri H."/>
            <person name="Kitamoto K."/>
            <person name="Kobayashi T."/>
            <person name="Konzack S."/>
            <person name="Kulkarni R."/>
            <person name="Kumagai T."/>
            <person name="Lafton A."/>
            <person name="Latge J.-P."/>
            <person name="Li W."/>
            <person name="Lord A."/>
            <person name="Lu C."/>
            <person name="Majoros W.H."/>
            <person name="May G.S."/>
            <person name="Miller B.L."/>
            <person name="Mohamoud Y."/>
            <person name="Molina M."/>
            <person name="Monod M."/>
            <person name="Mouyna I."/>
            <person name="Mulligan S."/>
            <person name="Murphy L.D."/>
            <person name="O'Neil S."/>
            <person name="Paulsen I."/>
            <person name="Penalva M.A."/>
            <person name="Pertea M."/>
            <person name="Price C."/>
            <person name="Pritchard B.L."/>
            <person name="Quail M.A."/>
            <person name="Rabbinowitsch E."/>
            <person name="Rawlins N."/>
            <person name="Rajandream M.A."/>
            <person name="Reichard U."/>
            <person name="Renauld H."/>
            <person name="Robson G.D."/>
            <person name="Rodriguez de Cordoba S."/>
            <person name="Rodriguez-Pena J.M."/>
            <person name="Ronning C.M."/>
            <person name="Rutter S."/>
            <person name="Salzberg S.L."/>
            <person name="Sanchez M."/>
            <person name="Sanchez-Ferrero J.C."/>
            <person name="Saunders D."/>
            <person name="Seeger K."/>
            <person name="Squares R."/>
            <person name="Squares S."/>
            <person name="Takeuchi M."/>
            <person name="Tekaia F."/>
            <person name="Turner G."/>
            <person name="Vazquez de Aldana C.R."/>
            <person name="Weidman J."/>
            <person name="White O."/>
            <person name="Woodward J.R."/>
            <person name="Yu J.-H."/>
            <person name="Fraser C.M."/>
            <person name="Galagan J.E."/>
            <person name="Asai K."/>
            <person name="Machida M."/>
            <person name="Hall N."/>
            <person name="Barrell B.G."/>
            <person name="Denning D.W."/>
        </authorList>
    </citation>
    <scope>NUCLEOTIDE SEQUENCE [LARGE SCALE GENOMIC DNA]</scope>
    <source>
        <strain>ATCC MYA-4609 / CBS 101355 / FGSC A1100 / Af293</strain>
    </source>
</reference>
<reference key="2">
    <citation type="journal article" date="1952" name="Science">
        <title>The treatment of amebiasis with fumagillin.</title>
        <authorList>
            <person name="Killough J.H."/>
            <person name="Magill G.B."/>
            <person name="Smith R.C."/>
        </authorList>
    </citation>
    <scope>BIOTECHNOLOGY</scope>
</reference>
<reference key="3">
    <citation type="journal article" date="1997" name="Proc. Natl. Acad. Sci. U.S.A.">
        <title>The anti-angiogenic agent fumagillin covalently binds and inhibits the methionine aminopeptidase, MetAP-2.</title>
        <authorList>
            <person name="Sin N."/>
            <person name="Meng L."/>
            <person name="Wang M.Q."/>
            <person name="Wen J.J."/>
            <person name="Bornmann W.G."/>
            <person name="Crews C.M."/>
        </authorList>
    </citation>
    <scope>BIOTECHNOLOGY</scope>
</reference>
<reference key="4">
    <citation type="journal article" date="2002" name="N. Engl. J. Med.">
        <title>Fumagillin treatment of intestinal microsporidiosis.</title>
        <authorList>
            <consortium name="Agence Nationale de Recherches sur le SIDA 090 Study Group"/>
            <person name="Molina J.M."/>
            <person name="Tourneur M."/>
            <person name="Sarfati C."/>
            <person name="Chevret S."/>
            <person name="de Gouvello A."/>
            <person name="Gobert J.G."/>
            <person name="Balkan S."/>
            <person name="Derouin F."/>
        </authorList>
    </citation>
    <scope>BIOTECHNOLOGY</scope>
</reference>
<reference key="5">
    <citation type="journal article" date="2008" name="Inflamm. Res.">
        <title>An inhibitor of methionine aminopeptidase type-2, PPI-2458, ameliorates the pathophysiological disease processes of rheumatoid arthritis.</title>
        <authorList>
            <person name="Lazarus D.D."/>
            <person name="Doyle E.G."/>
            <person name="Bernier S.G."/>
            <person name="Rogers A.B."/>
            <person name="Labenski M.T."/>
            <person name="Wakefield J.D."/>
            <person name="Karp R.M."/>
            <person name="Clark E.J."/>
            <person name="Lorusso J."/>
            <person name="Hoyt J.G."/>
            <person name="Thompson C.D."/>
            <person name="Hannig G."/>
            <person name="Westlin W.F."/>
        </authorList>
    </citation>
    <scope>BIOTECHNOLOGY</scope>
</reference>
<reference key="6">
    <citation type="journal article" date="2013" name="PLoS ONE">
        <title>The fumagillin gene cluster, an example of hundreds of genes under veA control in Aspergillus fumigatus.</title>
        <authorList>
            <person name="Dhingra S."/>
            <person name="Lind A.L."/>
            <person name="Lin H.C."/>
            <person name="Tang Y."/>
            <person name="Rokas A."/>
            <person name="Calvo A.M."/>
        </authorList>
    </citation>
    <scope>INDUCTION</scope>
</reference>
<reference key="7">
    <citation type="journal article" date="2013" name="J. Am. Chem. Soc.">
        <title>The fumagillin biosynthetic gene cluster in Aspergillus fumigatus encodes a cryptic terpene cyclase involved in the formation of beta-trans-bergamotene.</title>
        <authorList>
            <person name="Lin H.C."/>
            <person name="Chooi Y.H."/>
            <person name="Dhingra S."/>
            <person name="Xu W."/>
            <person name="Calvo A.M."/>
            <person name="Tang Y."/>
        </authorList>
    </citation>
    <scope>FUNCTION</scope>
    <scope>PATHWAY</scope>
</reference>
<reference key="8">
    <citation type="journal article" date="2013" name="Proc. Natl. Acad. Sci. U.S.A.">
        <title>Prototype of an intertwined secondary-metabolite supercluster.</title>
        <authorList>
            <person name="Wiemann P."/>
            <person name="Guo C.J."/>
            <person name="Palmer J.M."/>
            <person name="Sekonyela R."/>
            <person name="Wang C.C."/>
            <person name="Keller N.P."/>
        </authorList>
    </citation>
    <scope>IDENTIFICATION</scope>
    <scope>FUNCTION</scope>
    <scope>INDUCTION</scope>
</reference>
<reference key="9">
    <citation type="journal article" date="2014" name="J. Am. Chem. Soc.">
        <title>Generation of complexity in fungal terpene biosynthesis: discovery of a multifunctional cytochrome P450 in the fumagillin pathway.</title>
        <authorList>
            <person name="Lin H.C."/>
            <person name="Tsunematsu Y."/>
            <person name="Dhingra S."/>
            <person name="Xu W."/>
            <person name="Fukutomi M."/>
            <person name="Chooi Y.H."/>
            <person name="Cane D.E."/>
            <person name="Calvo A.M."/>
            <person name="Watanabe K."/>
            <person name="Tang Y."/>
        </authorList>
    </citation>
    <scope>FUNCTION</scope>
</reference>
<name>MAP21_ASPFU</name>
<proteinExistence type="evidence at protein level"/>
<sequence length="446" mass="48996">MTVDAPELLEKLRITDAGANGADMSSSTSAAANGTGKEVDDGSDDDGTENPPAVAAEHSTAKKKKNKKRKPKKKQPKVQTDPPSIPLSQLFPNNSYPKGEEVEYKDENRYRTTSEEKRHLDNLNSDFLSDYRQAAEAHRQVRQWAQRNIKPGQTLLEIANGIEESARCLVGHDGLTEGDSLIAGMGFPTGLNIDNIVAHYSPNAGCKTVLAQNNVLKVDIGIHVGGRIVDSAFTMAFDPMYDNLLAAVKDATNTGVREAGIDVRVGELGGYIQEAMESYECEIRGKTYPIKAIRNLCGHTILPYSIHGTKNVPFVKSNDMTKMEEGDVFAIETFGSTGSGRYVEGGEVSHYALRGDADRKDLTLSSARSLLTAIKKNFSTIPFCRRYLDRIGQEKYLLGLNYLVKSGIVEDYPPLNEKPGTYTAQFEHTILLRPTVKEVISRGDDY</sequence>
<dbReference type="EC" id="3.4.11.18" evidence="1"/>
<dbReference type="EMBL" id="AAHF01000014">
    <property type="protein sequence ID" value="EAL85125.1"/>
    <property type="status" value="ALT_SEQ"/>
    <property type="molecule type" value="Genomic_DNA"/>
</dbReference>
<dbReference type="RefSeq" id="XP_747163.1">
    <property type="nucleotide sequence ID" value="XM_742070.1"/>
</dbReference>
<dbReference type="SMR" id="Q4WAY7"/>
<dbReference type="FunCoup" id="Q4WAY7">
    <property type="interactions" value="1172"/>
</dbReference>
<dbReference type="STRING" id="330879.Q4WAY7"/>
<dbReference type="MEROPS" id="M24.002"/>
<dbReference type="GeneID" id="3504499"/>
<dbReference type="KEGG" id="afm:AFUA_8G00410"/>
<dbReference type="eggNOG" id="KOG2775">
    <property type="taxonomic scope" value="Eukaryota"/>
</dbReference>
<dbReference type="HOGENOM" id="CLU_015857_7_1_1"/>
<dbReference type="InParanoid" id="Q4WAY7"/>
<dbReference type="OrthoDB" id="7848262at2759"/>
<dbReference type="Proteomes" id="UP000002530">
    <property type="component" value="Chromosome 8"/>
</dbReference>
<dbReference type="GO" id="GO:0005737">
    <property type="term" value="C:cytoplasm"/>
    <property type="evidence" value="ECO:0000318"/>
    <property type="project" value="GO_Central"/>
</dbReference>
<dbReference type="GO" id="GO:0004177">
    <property type="term" value="F:aminopeptidase activity"/>
    <property type="evidence" value="ECO:0000318"/>
    <property type="project" value="GO_Central"/>
</dbReference>
<dbReference type="GO" id="GO:0004239">
    <property type="term" value="F:initiator methionyl aminopeptidase activity"/>
    <property type="evidence" value="ECO:0007669"/>
    <property type="project" value="UniProtKB-UniRule"/>
</dbReference>
<dbReference type="GO" id="GO:0046872">
    <property type="term" value="F:metal ion binding"/>
    <property type="evidence" value="ECO:0007669"/>
    <property type="project" value="UniProtKB-UniRule"/>
</dbReference>
<dbReference type="GO" id="GO:0070006">
    <property type="term" value="F:metalloaminopeptidase activity"/>
    <property type="evidence" value="ECO:0007669"/>
    <property type="project" value="UniProtKB-UniRule"/>
</dbReference>
<dbReference type="GO" id="GO:0008235">
    <property type="term" value="F:metalloexopeptidase activity"/>
    <property type="evidence" value="ECO:0000318"/>
    <property type="project" value="GO_Central"/>
</dbReference>
<dbReference type="GO" id="GO:0006508">
    <property type="term" value="P:proteolysis"/>
    <property type="evidence" value="ECO:0007669"/>
    <property type="project" value="UniProtKB-KW"/>
</dbReference>
<dbReference type="CDD" id="cd01088">
    <property type="entry name" value="MetAP2"/>
    <property type="match status" value="1"/>
</dbReference>
<dbReference type="Gene3D" id="3.90.230.10">
    <property type="entry name" value="Creatinase/methionine aminopeptidase superfamily"/>
    <property type="match status" value="1"/>
</dbReference>
<dbReference type="Gene3D" id="1.10.10.10">
    <property type="entry name" value="Winged helix-like DNA-binding domain superfamily/Winged helix DNA-binding domain"/>
    <property type="match status" value="1"/>
</dbReference>
<dbReference type="HAMAP" id="MF_03175">
    <property type="entry name" value="MetAP_2_euk"/>
    <property type="match status" value="1"/>
</dbReference>
<dbReference type="InterPro" id="IPR036005">
    <property type="entry name" value="Creatinase/aminopeptidase-like"/>
</dbReference>
<dbReference type="InterPro" id="IPR050247">
    <property type="entry name" value="Met_Aminopeptidase_Type2"/>
</dbReference>
<dbReference type="InterPro" id="IPR000994">
    <property type="entry name" value="Pept_M24"/>
</dbReference>
<dbReference type="InterPro" id="IPR001714">
    <property type="entry name" value="Pept_M24_MAP"/>
</dbReference>
<dbReference type="InterPro" id="IPR002468">
    <property type="entry name" value="Pept_M24A_MAP2"/>
</dbReference>
<dbReference type="InterPro" id="IPR036388">
    <property type="entry name" value="WH-like_DNA-bd_sf"/>
</dbReference>
<dbReference type="InterPro" id="IPR036390">
    <property type="entry name" value="WH_DNA-bd_sf"/>
</dbReference>
<dbReference type="NCBIfam" id="TIGR00501">
    <property type="entry name" value="met_pdase_II"/>
    <property type="match status" value="1"/>
</dbReference>
<dbReference type="PANTHER" id="PTHR45777">
    <property type="entry name" value="METHIONINE AMINOPEPTIDASE 2"/>
    <property type="match status" value="1"/>
</dbReference>
<dbReference type="PANTHER" id="PTHR45777:SF2">
    <property type="entry name" value="METHIONINE AMINOPEPTIDASE 2"/>
    <property type="match status" value="1"/>
</dbReference>
<dbReference type="Pfam" id="PF00557">
    <property type="entry name" value="Peptidase_M24"/>
    <property type="match status" value="1"/>
</dbReference>
<dbReference type="PRINTS" id="PR00599">
    <property type="entry name" value="MAPEPTIDASE"/>
</dbReference>
<dbReference type="SUPFAM" id="SSF55920">
    <property type="entry name" value="Creatinase/aminopeptidase"/>
    <property type="match status" value="1"/>
</dbReference>
<dbReference type="SUPFAM" id="SSF46785">
    <property type="entry name" value="Winged helix' DNA-binding domain"/>
    <property type="match status" value="1"/>
</dbReference>
<accession>Q4WAY7</accession>
<organism>
    <name type="scientific">Aspergillus fumigatus (strain ATCC MYA-4609 / CBS 101355 / FGSC A1100 / Af293)</name>
    <name type="common">Neosartorya fumigata</name>
    <dbReference type="NCBI Taxonomy" id="330879"/>
    <lineage>
        <taxon>Eukaryota</taxon>
        <taxon>Fungi</taxon>
        <taxon>Dikarya</taxon>
        <taxon>Ascomycota</taxon>
        <taxon>Pezizomycotina</taxon>
        <taxon>Eurotiomycetes</taxon>
        <taxon>Eurotiomycetidae</taxon>
        <taxon>Eurotiales</taxon>
        <taxon>Aspergillaceae</taxon>
        <taxon>Aspergillus</taxon>
        <taxon>Aspergillus subgen. Fumigati</taxon>
    </lineage>
</organism>
<evidence type="ECO:0000255" key="1">
    <source>
        <dbReference type="HAMAP-Rule" id="MF_03175"/>
    </source>
</evidence>
<evidence type="ECO:0000256" key="2">
    <source>
        <dbReference type="SAM" id="MobiDB-lite"/>
    </source>
</evidence>
<evidence type="ECO:0000269" key="3">
    <source>
    </source>
</evidence>
<evidence type="ECO:0000269" key="4">
    <source>
    </source>
</evidence>
<evidence type="ECO:0000269" key="5">
    <source>
    </source>
</evidence>
<evidence type="ECO:0000269" key="6">
    <source>
    </source>
</evidence>
<evidence type="ECO:0000269" key="7">
    <source>
    </source>
</evidence>
<evidence type="ECO:0000269" key="8">
    <source>
    </source>
</evidence>
<evidence type="ECO:0000269" key="9">
    <source>
    </source>
</evidence>
<evidence type="ECO:0000269" key="10">
    <source>
    </source>
</evidence>
<evidence type="ECO:0000303" key="11">
    <source>
    </source>
</evidence>
<evidence type="ECO:0000305" key="12"/>
<comment type="function">
    <text evidence="1 6 7 9">Cotranslationally removes the N-terminal methionine from nascent proteins. The N-terminal methionine is often cleaved when the second residue in the primary sequence is small and uncharged (Met-Ala-, Cys, Gly, Pro, Ser, Thr, or Val) (By similarity). Part of the gene cluster that mediates the biosynthesis of fumagillin, a meroterpenoid that has numerous biological activities including irreversible inhibition of human type 2 methionine aminopeptidase (METAP2) (PubMed:23488861, PubMed:24082142, PubMed:24568283). Since fumagillin is known to inhibit eukaryotic type 2 methionine aminopeptidase, af410 encodes a self-resistant enzyme for A.fumigatus toward fumagillin (PubMed:23488861).</text>
</comment>
<comment type="catalytic activity">
    <reaction evidence="1">
        <text>Release of N-terminal amino acids, preferentially methionine, from peptides and arylamides.</text>
        <dbReference type="EC" id="3.4.11.18"/>
    </reaction>
</comment>
<comment type="cofactor">
    <cofactor evidence="1">
        <name>Co(2+)</name>
        <dbReference type="ChEBI" id="CHEBI:48828"/>
    </cofactor>
    <cofactor evidence="1">
        <name>Zn(2+)</name>
        <dbReference type="ChEBI" id="CHEBI:29105"/>
    </cofactor>
    <cofactor evidence="1">
        <name>Mn(2+)</name>
        <dbReference type="ChEBI" id="CHEBI:29035"/>
    </cofactor>
    <cofactor evidence="1">
        <name>Fe(2+)</name>
        <dbReference type="ChEBI" id="CHEBI:29033"/>
    </cofactor>
    <text evidence="1">Binds 2 divalent metal cations per subunit. Has a high-affinity and a low affinity metal-binding site. The true nature of the physiological cofactor is under debate. The enzyme is active with cobalt, zinc, manganese or divalent iron ions. Most likely, methionine aminopeptidases function as mononuclear Fe(2+)-metalloproteases under physiological conditions, and the catalytically relevant metal-binding site has been assigned to the histidine-containing high-affinity site.</text>
</comment>
<comment type="subcellular location">
    <subcellularLocation>
        <location evidence="1">Cytoplasm</location>
    </subcellularLocation>
</comment>
<comment type="induction">
    <text evidence="7 8">Expression is controlled by the fumagillin biosynthesis cluster regulator fumR (PubMed:24082142). Expression is also under the control of the developmental and secondary metabolism regulator veA (PubMed:24116213).</text>
</comment>
<comment type="biotechnology">
    <text evidence="3 4 5 10">Fumagillin and its derivatives have been intensely studied for their potential use in the treatment of amebiasis, microsporidiosis and rheumatoid arthritis (PubMed:12075057, PubMed:14913169, PubMed:18209961). They have also interesting antiangiogenic properties by the irreversible inhibition of human type 2 methionine aminopeptidase (METAP2) (PubMed:9177176).</text>
</comment>
<comment type="similarity">
    <text evidence="1">Belongs to the peptidase M24A family. Methionine aminopeptidase eukaryotic type 2 subfamily.</text>
</comment>
<comment type="sequence caution" evidence="12">
    <conflict type="erroneous gene model prediction">
        <sequence resource="EMBL-CDS" id="EAL85125"/>
    </conflict>
</comment>